<comment type="function">
    <text evidence="1">Part of the ABC transporter complex LsrABCD involved in autoinducer 2 (AI-2) import. Binds AI-2 and delivers it to the LsrC and LsrD permeases (By similarity).</text>
</comment>
<comment type="subunit">
    <text evidence="1">The complex is composed of two ATP-binding proteins (LsrA), two transmembrane proteins (LsrC and LsrD) and a solute-binding protein (LsrB).</text>
</comment>
<comment type="subcellular location">
    <subcellularLocation>
        <location evidence="3">Periplasm</location>
    </subcellularLocation>
</comment>
<comment type="similarity">
    <text evidence="3">Belongs to the bacterial solute-binding protein 2 family.</text>
</comment>
<gene>
    <name type="primary">lsrB</name>
</gene>
<name>LSRB_PHOLU</name>
<accession>Q2PBL7</accession>
<protein>
    <recommendedName>
        <fullName>Autoinducer 2-binding protein LsrB</fullName>
        <shortName>AI-2-binding protein LsrB</shortName>
    </recommendedName>
</protein>
<sequence>MKTLILKKLALISLLSLACASWVHAAERIAFIPKLVGVGFFTSGGQGAVAAGKALGVNVTYDGPTEPSVAGQVQLINNFVNQGYNAIVVSAVSPDGLCPALKRAMKRGVKILTWDSDTSPECRSIYINQGTPDQLGGMLVDMAANQVQKKQAKVAFFYSSPTVTDQNQWVKEAKDKIAAEHPDWEIVTTQFGYNDATKSLQTAEGILKAWSDLDAIIAPDANALPAAAQAAENLKRQNVAIVGFSTPNVMRPYVERGTVKQFGLWDVVNQGKISIYIANELLKKGDLNVGDKLDIPDIGIVEVVPNRVQGYRYEAKGNGIVVLPERVIFTKDNINQYNF</sequence>
<organism>
    <name type="scientific">Photorhabdus luminescens</name>
    <name type="common">Xenorhabdus luminescens</name>
    <dbReference type="NCBI Taxonomy" id="29488"/>
    <lineage>
        <taxon>Bacteria</taxon>
        <taxon>Pseudomonadati</taxon>
        <taxon>Pseudomonadota</taxon>
        <taxon>Gammaproteobacteria</taxon>
        <taxon>Enterobacterales</taxon>
        <taxon>Morganellaceae</taxon>
        <taxon>Photorhabdus</taxon>
    </lineage>
</organism>
<dbReference type="EMBL" id="AJ967010">
    <property type="protein sequence ID" value="CAI91193.1"/>
    <property type="molecule type" value="Genomic_DNA"/>
</dbReference>
<dbReference type="RefSeq" id="WP_049584342.1">
    <property type="nucleotide sequence ID" value="NZ_FMWJ01000024.1"/>
</dbReference>
<dbReference type="SMR" id="Q2PBL7"/>
<dbReference type="STRING" id="29488.KS18_20650"/>
<dbReference type="GeneID" id="45657230"/>
<dbReference type="OrthoDB" id="9781890at2"/>
<dbReference type="GO" id="GO:0043190">
    <property type="term" value="C:ATP-binding cassette (ABC) transporter complex"/>
    <property type="evidence" value="ECO:0007669"/>
    <property type="project" value="InterPro"/>
</dbReference>
<dbReference type="GO" id="GO:0030288">
    <property type="term" value="C:outer membrane-bounded periplasmic space"/>
    <property type="evidence" value="ECO:0007669"/>
    <property type="project" value="TreeGrafter"/>
</dbReference>
<dbReference type="GO" id="GO:0030246">
    <property type="term" value="F:carbohydrate binding"/>
    <property type="evidence" value="ECO:0007669"/>
    <property type="project" value="TreeGrafter"/>
</dbReference>
<dbReference type="CDD" id="cd20003">
    <property type="entry name" value="PBP1_LsrB_Quorum_Sensing"/>
    <property type="match status" value="1"/>
</dbReference>
<dbReference type="Gene3D" id="3.40.50.2300">
    <property type="match status" value="2"/>
</dbReference>
<dbReference type="InterPro" id="IPR050555">
    <property type="entry name" value="Bact_Solute-Bind_Prot2"/>
</dbReference>
<dbReference type="InterPro" id="IPR030159">
    <property type="entry name" value="LsrB"/>
</dbReference>
<dbReference type="InterPro" id="IPR028082">
    <property type="entry name" value="Peripla_BP_I"/>
</dbReference>
<dbReference type="InterPro" id="IPR025997">
    <property type="entry name" value="SBP_2_dom"/>
</dbReference>
<dbReference type="NCBIfam" id="NF011937">
    <property type="entry name" value="PRK15408.1"/>
    <property type="match status" value="1"/>
</dbReference>
<dbReference type="PANTHER" id="PTHR30036:SF7">
    <property type="entry name" value="ABC TRANSPORTER PERIPLASMIC-BINDING PROTEIN YPHF"/>
    <property type="match status" value="1"/>
</dbReference>
<dbReference type="PANTHER" id="PTHR30036">
    <property type="entry name" value="D-XYLOSE-BINDING PERIPLASMIC PROTEIN"/>
    <property type="match status" value="1"/>
</dbReference>
<dbReference type="Pfam" id="PF13407">
    <property type="entry name" value="Peripla_BP_4"/>
    <property type="match status" value="1"/>
</dbReference>
<dbReference type="SUPFAM" id="SSF53822">
    <property type="entry name" value="Periplasmic binding protein-like I"/>
    <property type="match status" value="1"/>
</dbReference>
<evidence type="ECO:0000250" key="1"/>
<evidence type="ECO:0000255" key="2"/>
<evidence type="ECO:0000305" key="3"/>
<reference key="1">
    <citation type="journal article" date="2006" name="J. Bacteriol.">
        <title>Whole-genome comparison between Photorhabdus strains to identify genomic regions involved in the specificity of nematode interaction.</title>
        <authorList>
            <person name="Gaudriault S."/>
            <person name="Duchaud E."/>
            <person name="Lanois A."/>
            <person name="Canoy A.-S."/>
            <person name="Bourot S."/>
            <person name="DeRose R."/>
            <person name="Kunst F."/>
            <person name="Boemare N."/>
            <person name="Givaudan A."/>
        </authorList>
    </citation>
    <scope>NUCLEOTIDE SEQUENCE [GENOMIC DNA]</scope>
    <source>
        <strain>ATCC 29999 / DSM 3368 / BCRC 14801 / CCM 7077 / CIP 106429 / NCIMB 12670 / Hb</strain>
    </source>
</reference>
<keyword id="KW-0574">Periplasm</keyword>
<keyword id="KW-0732">Signal</keyword>
<feature type="signal peptide" evidence="2">
    <location>
        <begin position="1"/>
        <end position="25"/>
    </location>
</feature>
<feature type="chain" id="PRO_0000351324" description="Autoinducer 2-binding protein LsrB">
    <location>
        <begin position="26"/>
        <end position="339"/>
    </location>
</feature>
<proteinExistence type="inferred from homology"/>